<protein>
    <recommendedName>
        <fullName evidence="1">Methionyl-tRNA formyltransferase</fullName>
        <ecNumber evidence="1">2.1.2.9</ecNumber>
    </recommendedName>
</protein>
<organism>
    <name type="scientific">Vibrio alginolyticus</name>
    <dbReference type="NCBI Taxonomy" id="663"/>
    <lineage>
        <taxon>Bacteria</taxon>
        <taxon>Pseudomonadati</taxon>
        <taxon>Pseudomonadota</taxon>
        <taxon>Gammaproteobacteria</taxon>
        <taxon>Vibrionales</taxon>
        <taxon>Vibrionaceae</taxon>
        <taxon>Vibrio</taxon>
    </lineage>
</organism>
<feature type="chain" id="PRO_0000083079" description="Methionyl-tRNA formyltransferase">
    <location>
        <begin position="1" status="less than"/>
        <end position="247"/>
    </location>
</feature>
<feature type="non-terminal residue">
    <location>
        <position position="1"/>
    </location>
</feature>
<dbReference type="EC" id="2.1.2.9" evidence="1"/>
<dbReference type="EMBL" id="D86411">
    <property type="protein sequence ID" value="BAA31225.1"/>
    <property type="molecule type" value="Genomic_DNA"/>
</dbReference>
<dbReference type="SMR" id="O87726"/>
<dbReference type="STRING" id="663.BAU10_14915"/>
<dbReference type="eggNOG" id="COG0223">
    <property type="taxonomic scope" value="Bacteria"/>
</dbReference>
<dbReference type="GO" id="GO:0005829">
    <property type="term" value="C:cytosol"/>
    <property type="evidence" value="ECO:0007669"/>
    <property type="project" value="TreeGrafter"/>
</dbReference>
<dbReference type="GO" id="GO:0004479">
    <property type="term" value="F:methionyl-tRNA formyltransferase activity"/>
    <property type="evidence" value="ECO:0007669"/>
    <property type="project" value="UniProtKB-EC"/>
</dbReference>
<dbReference type="CDD" id="cd08646">
    <property type="entry name" value="FMT_core_Met-tRNA-FMT_N"/>
    <property type="match status" value="1"/>
</dbReference>
<dbReference type="CDD" id="cd08704">
    <property type="entry name" value="Met_tRNA_FMT_C"/>
    <property type="match status" value="1"/>
</dbReference>
<dbReference type="Gene3D" id="3.10.25.10">
    <property type="entry name" value="Formyl transferase, C-terminal domain"/>
    <property type="match status" value="1"/>
</dbReference>
<dbReference type="Gene3D" id="3.40.50.170">
    <property type="entry name" value="Formyl transferase, N-terminal domain"/>
    <property type="match status" value="1"/>
</dbReference>
<dbReference type="InterPro" id="IPR005794">
    <property type="entry name" value="Fmt"/>
</dbReference>
<dbReference type="InterPro" id="IPR005793">
    <property type="entry name" value="Formyl_trans_C"/>
</dbReference>
<dbReference type="InterPro" id="IPR037022">
    <property type="entry name" value="Formyl_trans_C_sf"/>
</dbReference>
<dbReference type="InterPro" id="IPR002376">
    <property type="entry name" value="Formyl_transf_N"/>
</dbReference>
<dbReference type="InterPro" id="IPR036477">
    <property type="entry name" value="Formyl_transf_N_sf"/>
</dbReference>
<dbReference type="InterPro" id="IPR011034">
    <property type="entry name" value="Formyl_transferase-like_C_sf"/>
</dbReference>
<dbReference type="InterPro" id="IPR001555">
    <property type="entry name" value="GART_AS"/>
</dbReference>
<dbReference type="InterPro" id="IPR044135">
    <property type="entry name" value="Met-tRNA-FMT_C"/>
</dbReference>
<dbReference type="InterPro" id="IPR041711">
    <property type="entry name" value="Met-tRNA-FMT_N"/>
</dbReference>
<dbReference type="NCBIfam" id="TIGR00460">
    <property type="entry name" value="fmt"/>
    <property type="match status" value="1"/>
</dbReference>
<dbReference type="PANTHER" id="PTHR11138">
    <property type="entry name" value="METHIONYL-TRNA FORMYLTRANSFERASE"/>
    <property type="match status" value="1"/>
</dbReference>
<dbReference type="PANTHER" id="PTHR11138:SF5">
    <property type="entry name" value="METHIONYL-TRNA FORMYLTRANSFERASE, MITOCHONDRIAL"/>
    <property type="match status" value="1"/>
</dbReference>
<dbReference type="Pfam" id="PF02911">
    <property type="entry name" value="Formyl_trans_C"/>
    <property type="match status" value="1"/>
</dbReference>
<dbReference type="Pfam" id="PF00551">
    <property type="entry name" value="Formyl_trans_N"/>
    <property type="match status" value="1"/>
</dbReference>
<dbReference type="SUPFAM" id="SSF50486">
    <property type="entry name" value="FMT C-terminal domain-like"/>
    <property type="match status" value="1"/>
</dbReference>
<dbReference type="SUPFAM" id="SSF53328">
    <property type="entry name" value="Formyltransferase"/>
    <property type="match status" value="1"/>
</dbReference>
<dbReference type="PROSITE" id="PS00373">
    <property type="entry name" value="GART"/>
    <property type="match status" value="1"/>
</dbReference>
<evidence type="ECO:0000250" key="1">
    <source>
        <dbReference type="UniProtKB" id="P23882"/>
    </source>
</evidence>
<evidence type="ECO:0000305" key="2"/>
<comment type="function">
    <text evidence="1">Attaches a formyl group to the free amino group of methionyl-tRNA(fMet). The formyl group appears to play a dual role in the initiator identity of N-formylmethionyl-tRNA by promoting its recognition by IF2 and preventing the misappropriation of this tRNA by the elongation apparatus.</text>
</comment>
<comment type="catalytic activity">
    <reaction evidence="1">
        <text>L-methionyl-tRNA(fMet) + (6R)-10-formyltetrahydrofolate = N-formyl-L-methionyl-tRNA(fMet) + (6S)-5,6,7,8-tetrahydrofolate + H(+)</text>
        <dbReference type="Rhea" id="RHEA:24380"/>
        <dbReference type="Rhea" id="RHEA-COMP:9952"/>
        <dbReference type="Rhea" id="RHEA-COMP:9953"/>
        <dbReference type="ChEBI" id="CHEBI:15378"/>
        <dbReference type="ChEBI" id="CHEBI:57453"/>
        <dbReference type="ChEBI" id="CHEBI:78530"/>
        <dbReference type="ChEBI" id="CHEBI:78844"/>
        <dbReference type="ChEBI" id="CHEBI:195366"/>
        <dbReference type="EC" id="2.1.2.9"/>
    </reaction>
</comment>
<comment type="similarity">
    <text evidence="2">Belongs to the Fmt family.</text>
</comment>
<proteinExistence type="inferred from homology"/>
<gene>
    <name type="primary">fmt</name>
</gene>
<accession>O87726</accession>
<keyword id="KW-0648">Protein biosynthesis</keyword>
<keyword id="KW-0808">Transferase</keyword>
<sequence>SFKSDEAKQELADLNADLMVFVAYGMLLPQAVLDTPKLGCINVHGSILPRWRCAAPIQRSIWAGDAETGVTIMQMDIGLDTGDMLKIATLPIETTDTSASMYEKLAELGPEALIDCLADIAAGKAVPVKQDDELANYAKKLSKEEARINWNDDAAHIERCVRAFNPWPMSHFEAAENSIKVWKAVWQSKPVTTSGTIVQADKTGIYVVTGNGVLVLEQLQVPGKKAMSVQDILNSRAAWFEVGTLLV</sequence>
<reference key="1">
    <citation type="journal article" date="1998" name="Microbiology">
        <title>Cloning of the trkAH gene cluster and characterization of the Trk K+-uptake system of Vibrio alginolyticus.</title>
        <authorList>
            <person name="Nakamura T."/>
            <person name="Yamamuro N."/>
            <person name="Stumpe S."/>
            <person name="Unemoto T."/>
            <person name="Bakker E.P."/>
        </authorList>
    </citation>
    <scope>NUCLEOTIDE SEQUENCE [GENOMIC DNA]</scope>
    <source>
        <strain>138-2</strain>
    </source>
</reference>
<name>FMT_VIBAL</name>